<evidence type="ECO:0000255" key="1"/>
<evidence type="ECO:0000256" key="2">
    <source>
        <dbReference type="SAM" id="MobiDB-lite"/>
    </source>
</evidence>
<evidence type="ECO:0000305" key="3"/>
<proteinExistence type="inferred from homology"/>
<organism>
    <name type="scientific">Staphylococcus aureus (strain N315)</name>
    <dbReference type="NCBI Taxonomy" id="158879"/>
    <lineage>
        <taxon>Bacteria</taxon>
        <taxon>Bacillati</taxon>
        <taxon>Bacillota</taxon>
        <taxon>Bacilli</taxon>
        <taxon>Bacillales</taxon>
        <taxon>Staphylococcaceae</taxon>
        <taxon>Staphylococcus</taxon>
    </lineage>
</organism>
<dbReference type="EMBL" id="BA000018">
    <property type="protein sequence ID" value="BAB42528.1"/>
    <property type="molecule type" value="Genomic_DNA"/>
</dbReference>
<dbReference type="PIR" id="C89921">
    <property type="entry name" value="C89921"/>
</dbReference>
<dbReference type="SMR" id="Q7A5M1"/>
<dbReference type="EnsemblBacteria" id="BAB42528">
    <property type="protein sequence ID" value="BAB42528"/>
    <property type="gene ID" value="BAB42528"/>
</dbReference>
<dbReference type="KEGG" id="sau:SA1268"/>
<dbReference type="HOGENOM" id="CLU_000047_2_0_9"/>
<dbReference type="Gene3D" id="3.10.20.890">
    <property type="match status" value="1"/>
</dbReference>
<dbReference type="Gene3D" id="1.20.120.1850">
    <property type="entry name" value="Ebh helix bundles repeating unit (S and A modules)"/>
    <property type="match status" value="2"/>
</dbReference>
<dbReference type="Gene3D" id="1.20.5.420">
    <property type="entry name" value="Immunoglobulin FC, subunit C"/>
    <property type="match status" value="10"/>
</dbReference>
<dbReference type="InterPro" id="IPR044024">
    <property type="entry name" value="aRib"/>
</dbReference>
<dbReference type="InterPro" id="IPR026361">
    <property type="entry name" value="Ebh_dom"/>
</dbReference>
<dbReference type="InterPro" id="IPR051197">
    <property type="entry name" value="ECM-binding_protein"/>
</dbReference>
<dbReference type="InterPro" id="IPR020840">
    <property type="entry name" value="Extracell_matrix-bd_GA"/>
</dbReference>
<dbReference type="InterPro" id="IPR002988">
    <property type="entry name" value="GA_module"/>
</dbReference>
<dbReference type="InterPro" id="IPR009063">
    <property type="entry name" value="Ig/albumin-bd_sf"/>
</dbReference>
<dbReference type="InterPro" id="IPR005877">
    <property type="entry name" value="YSIRK_signal_dom"/>
</dbReference>
<dbReference type="NCBIfam" id="TIGR04264">
    <property type="entry name" value="hyperosmo_Ebh"/>
    <property type="match status" value="1"/>
</dbReference>
<dbReference type="NCBIfam" id="TIGR01168">
    <property type="entry name" value="YSIRK_signal"/>
    <property type="match status" value="1"/>
</dbReference>
<dbReference type="PANTHER" id="PTHR33150">
    <property type="entry name" value="EXTRACELLULAR MATRIX-BINDING PROTEIN EBH"/>
    <property type="match status" value="1"/>
</dbReference>
<dbReference type="PANTHER" id="PTHR33150:SF1">
    <property type="entry name" value="EXTRACELLULAR MATRIX-BINDING PROTEIN EBH"/>
    <property type="match status" value="1"/>
</dbReference>
<dbReference type="Pfam" id="PF18938">
    <property type="entry name" value="aRib"/>
    <property type="match status" value="1"/>
</dbReference>
<dbReference type="Pfam" id="PF07554">
    <property type="entry name" value="FIVAR"/>
    <property type="match status" value="13"/>
</dbReference>
<dbReference type="Pfam" id="PF01468">
    <property type="entry name" value="GA"/>
    <property type="match status" value="1"/>
</dbReference>
<dbReference type="Pfam" id="PF04650">
    <property type="entry name" value="YSIRK_signal"/>
    <property type="match status" value="1"/>
</dbReference>
<dbReference type="SMART" id="SM00844">
    <property type="entry name" value="GA"/>
    <property type="match status" value="7"/>
</dbReference>
<dbReference type="SUPFAM" id="SSF46997">
    <property type="entry name" value="Bacterial immunoglobulin/albumin-binding domains"/>
    <property type="match status" value="12"/>
</dbReference>
<sequence length="3890" mass="420628">MNYRDKIQKFSIRKYTVGTFSTVIATLVFLGFNTSQAHAAETNQPASVVKQKQQSNNEQTENRESQVQNSQNSQNSQSLSATHENEQPNNSQANLVNQKVAQSSTTNDEQPASQNVNTKKDSATAATTQPDKEESKHKQNESQSANKNGNDNRAAHVENHEANVVTASDSSDNGNVQHDRNELQAFFDANYHDYRFIDRENADSGTFNYVKGIFDKINTLLGSNDPINNKDLQLAYKELEQAVALIRTMPQRQQTSRRSNRIQTRSVESRAAEPRSVSDYQNANSSYYVENANDGSGYPVGTYINASSKGAPYNLPTTPWNTLKASDSKEIALMTAKQTGDGYQWVIKFNKGHAPHQNMIFWFALPADQVPVGRTDFVTVNSDGTNVQWSHGAGAGANKPLQQMWEYGVNDPDRSHDFKIRNRSGQVIYSWPTVHVYSLEDLSRASDYFSEAGATPATKAFGRQNFEYINGQKPAESPGVPKVYTFIGQGDASYTISFKTQGPTVNKLYYAAGGRALEYNQLFMYSQLYVESTQDHQQRLNGLRQVVNRTYRIGTTKRVEVSQGNVQTKKVLESTNLNIDDFVDDPLSYVKTPSNKVLGFYPTNANTNAFRPGGVQELNEYQLSQLFTDQKLQEAARTRNPIRLMIGFDYPDGYGNSETLVPVNLTVLPEIQHNIKFFKNDDTQNIAEKPFSKQAGHPVFYVYAGNQGNASVNLGGSVTSIQPLRINLTSNENFTDKDWQITGIPRTLHIENSTNRTNNARERNIELVGNLLPGDYFGTIRFGRKEQLFEIRVKPHTPTITTTAEQLRGTALQKVPVNISGIPLDPSALVYLVAPTNQTTNGGSEADQIPSGYTILATGTPDGVHNTITIRPQDYVVFIPPVGKQIRAVVYYNKVVASNMSNAVTILPDDIPPTINNPVGINAKYYRGDEVNFTMGVSDRHSGIKNTTITTLPSGWTSNLTKSDNKNGSLAITGRVSMNQAFNSDITFKVSATDNVNNTTNDSQSKHVSIHVGKISEDAHPIVLGNTEKVVVVNPTAVSNDEKQSIITAFMNKNQNIRGYLASTDPVTVDNNGNVTLHYRDGSSTTLDATNVMTYEPVVKSEYQTANAAKTATVTIAKGQSFNIGDIKQYFTLSNGQAIPNGTFTNITSDRTIPTAQEVSQMNAGTQLYHIVASNAYHKDTEDFYISLKIVDVKQPEGDQRVYRTSTYDLTTDEISKVKQAFINANRDVITLAEGDISVTNTPNGANVSTITVNINKGRLTKSFASNLANMNFLRWVNFPQDYTVTWTNAKIANRPTDGGLSWSDDHKSLIYRYDATLGTQITTNDILTMLKATTTVPGLRNNITGNEKAQAEAGGRPNYRTTGYSQSNATTDGQRQFTLNGQVIQILDIINPSNGYGGQPVTNSNTRANHSNSTVVNVNEPAANGAGAFTIDHVVKSNSTHNASDAVYKAQLYLTPYGPKQYVEHLNQNTGNTTDAINIYFVPSDLVNPTISVGNYTNHQVFSGETFTNTITANDNFGVQSVTVPNTSQITGTVDNNHQHVSATAPNVTSATSKTINLLATDTSGNTATTSFNVTVKPLRDKYRVGTSSTAANPVRIANISNNATVSQADQTTIINSLTFTSNAPNRNYATASANEITSKTVSNVSRTGNNANVTVTVTHQDGTTSTVTVPVKHVIPEIVAHSHYTVQGQDFPAGNGSSAADYFKLSNGSAIPDATITWVSGQAPNKDNTRIGEDITVTAHILIDGETTPITKTATYKVVRTVPKHVFETARGVLYPGVSDMYDAKQYVKPVNNSWSTNAQHMNFQFVGTYGPNKDVVGISTRLIRVTYDNRQTEDLTILSKVKPDPPRIDANSVTYKAGLTNQEIKVNNVLNNSSVKLFKADNTPLNVTNITHGSGFSSVVTVSDALPNGGIKAKSSISMNNVTYTTQDEHGQVVTVTRNESVDSNDSASVTVTPQLQATTEGAVFIKGGDGFDFGHVERFIQNPPHGATVAWHDSPDTWKNTVGNTHKTAVVTLPSGQGTRNVEVPVKVYPVANAKAPSRDVKGQNLTHGTNAIDYITFDPNTNTNGITAAWANRQQPNNQQAGVQHLNVDVTYPGISAAKRVPVTVNVYQFEFPQTTYTTTVGGTLASGTQASGYAHMQNASGLPTDGFTYKWNRDTTGTNDANWAAMNKPNTAQVVNAKYDVIYNGHTFATSLPAKFVVKDVQPAKPTVTETAAGAITIAPGANQTVNTHAGNVTTYADKLVIKRNGNVVTTFTRRNNTSPWVKEASADNVTGIVGTNNGITVAAGTFNPADTIQVVATQGSGETISDEQRSDDFTVVAPQPNQATTKIWQNGHIDITPNNPSGHLINPTQAMDIAYTEKVGNGAEHSKTINVVRGQNNQWTIANKPDYVTLDAQTGKVTFNANTIKPNSSITITPKAGTGHSVSSNPSTLTAPAAHTVNTTEIVKDYGSNVTAAEINNAVQVANKRTATIKNGTAMPTNLAGGSTTTIPVTVTYNDGSTEEVQESIFTKADKRELITAKNHLDDPVSTEGKKPGTITQYNNAMHNAQQQINTAKTEAQQVINNERATPQQVSDALTKVRAAQTKIDQAKALLQNKEDNSQLVTSKNNLQSSVNQVPSTAGMTQQSIDNYNAKKREAETEITAAQRVIDNGDATAQQISDEKHRVDNALTALNQAKHDLTADTHALEQAVQQLNRTGTTTGKKPASITAYNNSIRALQSDLTSAKNSANAIIQKPIRTVQEVQSALTNVNRVNERLTQAINQLVPLADNSALRTAKTKLDEEINKSVTTDGMTQSSIQAYENAKRAGQTETTNAQNVINNGDATDQQIAAEKTKVEEKYNSLKQAIAGLTPDLAPLQTAKTQLQNDIDQPTSTTGMTSASVAAFNDKLSAARTKIQEIDRVLASHPDVATIRQNVTAANAAKTALDQARNGLTVDKAPLENAKNQLQHSIDTQTSTTGMTQDSINAYNAKLTAARNKVQQINQVLAGSPTVDQINTNTSAANQAKSDLDHARQALTPDKAPLQNAKTQLEQSINQPTDTTGMTTASLNAYNQKLQAARQKLTEINQVLNGNPTVQNINDKVAEANQAKDQLNTARQGLTLDRQPALTTLHGASNLNQAQQNNFTQQINAAQNHAALETIKSNITALNTAMTKLKDSVADNNTIKSGQNYTDATPANKQAYDNAVNAAKGVIGETTNPTMDVNTVNQKAASVKSTKDALDGQQNLQRAKTEATNAITHASDLNQAQKNALTQQVNSAQNVQAVNDIKQTTQSLNTAMTGLKRGVANHNQVVQSDNYVNADTNKKNDYNNAYNHANDIINGNAQHPVITPSDVNNALSNVTSKEHALNGEAKLNAAKQEANTALGHLNNLNNVQRQNLQSQINGAHQIDAVNTIKQNATNLNSAMGNLRQAVADKDQVKRTEDYADADTAKQNAYNSAVSSAETIINQTANPTMSVDDVNRATSAVTTNKNALNGDEKLVQSKTDAARAIDALPHLNNAQKADVKSKINAASNIAGVNTVKQQGTDLNTAMGNLQGAINDEQTTLNSQNYQDATPSKKTAYTNAVQAAKDILNKSNGQNKTKDQVTEAMNQVNSAKNNLDGTRLLDQAKQTAKQQLNNMTHLTTAQKTNLTNQINSGTTVAGVHTVQSNANTLDQAMNTLRQSIANNDATKASEDYVDANNDKQTAYNNAVAAAETIINANSNPEMNPSTITQKAEQVNSSKTALNGDENLATAKQNAKTYLNTLTSITDAQKNNLISQISSATRVSGVDTVKQNAQHLDQAMANLQNGINNESQVKSSEKYRDADTNKQQEYDNAITAAKAILNKSTGPNTAQNAVEAALQRVNTAKDALNGDAKLIAAQNAAKQHLGTLTHITTAQRNDLTNQIS</sequence>
<protein>
    <recommendedName>
        <fullName>Extracellular matrix-binding protein EbhB</fullName>
    </recommendedName>
    <alternativeName>
        <fullName>ECM-binding protein homolog B</fullName>
    </alternativeName>
</protein>
<reference key="1">
    <citation type="journal article" date="2001" name="Lancet">
        <title>Whole genome sequencing of meticillin-resistant Staphylococcus aureus.</title>
        <authorList>
            <person name="Kuroda M."/>
            <person name="Ohta T."/>
            <person name="Uchiyama I."/>
            <person name="Baba T."/>
            <person name="Yuzawa H."/>
            <person name="Kobayashi I."/>
            <person name="Cui L."/>
            <person name="Oguchi A."/>
            <person name="Aoki K."/>
            <person name="Nagai Y."/>
            <person name="Lian J.-Q."/>
            <person name="Ito T."/>
            <person name="Kanamori M."/>
            <person name="Matsumaru H."/>
            <person name="Maruyama A."/>
            <person name="Murakami H."/>
            <person name="Hosoyama A."/>
            <person name="Mizutani-Ui Y."/>
            <person name="Takahashi N.K."/>
            <person name="Sawano T."/>
            <person name="Inoue R."/>
            <person name="Kaito C."/>
            <person name="Sekimizu K."/>
            <person name="Hirakawa H."/>
            <person name="Kuhara S."/>
            <person name="Goto S."/>
            <person name="Yabuzaki J."/>
            <person name="Kanehisa M."/>
            <person name="Yamashita A."/>
            <person name="Oshima K."/>
            <person name="Furuya K."/>
            <person name="Yoshino C."/>
            <person name="Shiba T."/>
            <person name="Hattori M."/>
            <person name="Ogasawara N."/>
            <person name="Hayashi H."/>
            <person name="Hiramatsu K."/>
        </authorList>
    </citation>
    <scope>NUCLEOTIDE SEQUENCE [LARGE SCALE GENOMIC DNA]</scope>
    <source>
        <strain>N315</strain>
    </source>
</reference>
<feature type="signal peptide" evidence="1">
    <location>
        <begin position="1"/>
        <end position="39"/>
    </location>
</feature>
<feature type="chain" id="PRO_0000345979" description="Extracellular matrix-binding protein EbhB">
    <location>
        <begin position="40"/>
        <end position="3890"/>
    </location>
</feature>
<feature type="domain" description="FIVAR 1">
    <location>
        <begin position="2524"/>
        <end position="2580"/>
    </location>
</feature>
<feature type="domain" description="FIVAR 2">
    <location>
        <begin position="2610"/>
        <end position="2666"/>
    </location>
</feature>
<feature type="domain" description="FIVAR 3">
    <location>
        <begin position="2687"/>
        <end position="2750"/>
    </location>
</feature>
<feature type="domain" description="FIVAR 4">
    <location>
        <begin position="2780"/>
        <end position="2836"/>
    </location>
</feature>
<feature type="domain" description="FIVAR 5">
    <location>
        <begin position="2864"/>
        <end position="2919"/>
    </location>
</feature>
<feature type="domain" description="FIVAR 6">
    <location>
        <begin position="2947"/>
        <end position="3002"/>
    </location>
</feature>
<feature type="domain" description="FIVAR 7">
    <location>
        <begin position="3030"/>
        <end position="3085"/>
    </location>
</feature>
<feature type="domain" description="FIVAR 8">
    <location>
        <begin position="3154"/>
        <end position="3212"/>
    </location>
</feature>
<feature type="domain" description="FIVAR 9">
    <location>
        <begin position="3280"/>
        <end position="3339"/>
    </location>
</feature>
<feature type="domain" description="FIVAR 10">
    <location>
        <begin position="3407"/>
        <end position="3465"/>
    </location>
</feature>
<feature type="domain" description="FIVAR 11">
    <location>
        <begin position="3533"/>
        <end position="3591"/>
    </location>
</feature>
<feature type="domain" description="FIVAR 12">
    <location>
        <begin position="3659"/>
        <end position="3717"/>
    </location>
</feature>
<feature type="domain" description="FIVAR 13">
    <location>
        <begin position="3785"/>
        <end position="3843"/>
    </location>
</feature>
<feature type="region of interest" description="Disordered" evidence="2">
    <location>
        <begin position="41"/>
        <end position="152"/>
    </location>
</feature>
<feature type="region of interest" description="Disordered" evidence="2">
    <location>
        <begin position="249"/>
        <end position="277"/>
    </location>
</feature>
<feature type="region of interest" description="Disordered" evidence="2">
    <location>
        <begin position="1347"/>
        <end position="1372"/>
    </location>
</feature>
<feature type="region of interest" description="Disordered" evidence="2">
    <location>
        <begin position="2418"/>
        <end position="2438"/>
    </location>
</feature>
<feature type="compositionally biased region" description="Polar residues" evidence="2">
    <location>
        <begin position="41"/>
        <end position="59"/>
    </location>
</feature>
<feature type="compositionally biased region" description="Low complexity" evidence="2">
    <location>
        <begin position="65"/>
        <end position="78"/>
    </location>
</feature>
<feature type="compositionally biased region" description="Polar residues" evidence="2">
    <location>
        <begin position="79"/>
        <end position="117"/>
    </location>
</feature>
<feature type="compositionally biased region" description="Basic and acidic residues" evidence="2">
    <location>
        <begin position="130"/>
        <end position="140"/>
    </location>
</feature>
<feature type="compositionally biased region" description="Polar residues" evidence="2">
    <location>
        <begin position="141"/>
        <end position="151"/>
    </location>
</feature>
<feature type="compositionally biased region" description="Polar residues" evidence="2">
    <location>
        <begin position="250"/>
        <end position="266"/>
    </location>
</feature>
<feature type="compositionally biased region" description="Polar residues" evidence="2">
    <location>
        <begin position="1360"/>
        <end position="1372"/>
    </location>
</feature>
<feature type="compositionally biased region" description="Polar residues" evidence="2">
    <location>
        <begin position="2427"/>
        <end position="2438"/>
    </location>
</feature>
<gene>
    <name type="primary">ebhB</name>
    <name type="ordered locus">SA1268</name>
</gene>
<accession>Q7A5M1</accession>
<comment type="caution">
    <text evidence="3">In strains Mu3, Mu50, N315 and Newman, ebh is divided into two ORFs, ebhA and ebhB, which correspond to the C-terminal and N-terminal parts of the full gene, respectively.</text>
</comment>
<keyword id="KW-0677">Repeat</keyword>
<keyword id="KW-0732">Signal</keyword>
<name>EBHB_STAAN</name>